<keyword id="KW-0484">Methanogenesis</keyword>
<keyword id="KW-1185">Reference proteome</keyword>
<feature type="chain" id="PRO_0000147495" description="Methyl-coenzyme M reductase II operon protein D">
    <location>
        <begin position="1"/>
        <end position="167"/>
    </location>
</feature>
<evidence type="ECO:0000250" key="1"/>
<reference key="1">
    <citation type="journal article" date="1996" name="Science">
        <title>Complete genome sequence of the methanogenic archaeon, Methanococcus jannaschii.</title>
        <authorList>
            <person name="Bult C.J."/>
            <person name="White O."/>
            <person name="Olsen G.J."/>
            <person name="Zhou L."/>
            <person name="Fleischmann R.D."/>
            <person name="Sutton G.G."/>
            <person name="Blake J.A."/>
            <person name="FitzGerald L.M."/>
            <person name="Clayton R.A."/>
            <person name="Gocayne J.D."/>
            <person name="Kerlavage A.R."/>
            <person name="Dougherty B.A."/>
            <person name="Tomb J.-F."/>
            <person name="Adams M.D."/>
            <person name="Reich C.I."/>
            <person name="Overbeek R."/>
            <person name="Kirkness E.F."/>
            <person name="Weinstock K.G."/>
            <person name="Merrick J.M."/>
            <person name="Glodek A."/>
            <person name="Scott J.L."/>
            <person name="Geoghagen N.S.M."/>
            <person name="Weidman J.F."/>
            <person name="Fuhrmann J.L."/>
            <person name="Nguyen D."/>
            <person name="Utterback T.R."/>
            <person name="Kelley J.M."/>
            <person name="Peterson J.D."/>
            <person name="Sadow P.W."/>
            <person name="Hanna M.C."/>
            <person name="Cotton M.D."/>
            <person name="Roberts K.M."/>
            <person name="Hurst M.A."/>
            <person name="Kaine B.P."/>
            <person name="Borodovsky M."/>
            <person name="Klenk H.-P."/>
            <person name="Fraser C.M."/>
            <person name="Smith H.O."/>
            <person name="Woese C.R."/>
            <person name="Venter J.C."/>
        </authorList>
    </citation>
    <scope>NUCLEOTIDE SEQUENCE [LARGE SCALE GENOMIC DNA]</scope>
    <source>
        <strain>ATCC 43067 / DSM 2661 / JAL-1 / JCM 10045 / NBRC 100440</strain>
    </source>
</reference>
<name>MCRW_METJA</name>
<dbReference type="EMBL" id="L77117">
    <property type="protein sequence ID" value="AAB98099.1"/>
    <property type="molecule type" value="Genomic_DNA"/>
</dbReference>
<dbReference type="PIR" id="F64314">
    <property type="entry name" value="F64314"/>
</dbReference>
<dbReference type="SMR" id="Q57582"/>
<dbReference type="FunCoup" id="Q57582">
    <property type="interactions" value="1"/>
</dbReference>
<dbReference type="STRING" id="243232.MJ_0118"/>
<dbReference type="PaxDb" id="243232-MJ_0118"/>
<dbReference type="EnsemblBacteria" id="AAB98099">
    <property type="protein sequence ID" value="AAB98099"/>
    <property type="gene ID" value="MJ_0118"/>
</dbReference>
<dbReference type="KEGG" id="mja:MJ_0118"/>
<dbReference type="eggNOG" id="arCOG04859">
    <property type="taxonomic scope" value="Archaea"/>
</dbReference>
<dbReference type="HOGENOM" id="CLU_118415_0_0_2"/>
<dbReference type="InParanoid" id="Q57582"/>
<dbReference type="OrthoDB" id="109281at2157"/>
<dbReference type="PhylomeDB" id="Q57582"/>
<dbReference type="Proteomes" id="UP000000805">
    <property type="component" value="Chromosome"/>
</dbReference>
<dbReference type="GO" id="GO:0015948">
    <property type="term" value="P:methanogenesis"/>
    <property type="evidence" value="ECO:0007669"/>
    <property type="project" value="UniProtKB-KW"/>
</dbReference>
<dbReference type="InterPro" id="IPR003901">
    <property type="entry name" value="Me_CoM_Rdtase_D"/>
</dbReference>
<dbReference type="NCBIfam" id="TIGR03260">
    <property type="entry name" value="met_CoM_red_D"/>
    <property type="match status" value="1"/>
</dbReference>
<dbReference type="Pfam" id="PF02505">
    <property type="entry name" value="MCR_D"/>
    <property type="match status" value="1"/>
</dbReference>
<dbReference type="PIRSF" id="PIRSF005636">
    <property type="entry name" value="McrD"/>
    <property type="match status" value="1"/>
</dbReference>
<protein>
    <recommendedName>
        <fullName>Methyl-coenzyme M reductase II operon protein D</fullName>
    </recommendedName>
</protein>
<sequence>MKNEVKFMSEVIKVVDVKIFPHRYLKAETTEKVLNEIYDLDGIVRVIVHGQPLPKTVPFGPARGLPVNHQDRKVIKVKGEEMELRVKVGEIIITVEGEKLEKIMDGIEEICKRNFPFGYDIYVGAFTKIKPTVTDYMKYGDISSIDPRLIGMVDASARLKDSVKMIK</sequence>
<comment type="subunit">
    <text evidence="1">MCR is composed of three subunits: alpha, beta, and gamma. The function of protein D is not known (By similarity).</text>
</comment>
<accession>Q57582</accession>
<proteinExistence type="inferred from homology"/>
<organism>
    <name type="scientific">Methanocaldococcus jannaschii (strain ATCC 43067 / DSM 2661 / JAL-1 / JCM 10045 / NBRC 100440)</name>
    <name type="common">Methanococcus jannaschii</name>
    <dbReference type="NCBI Taxonomy" id="243232"/>
    <lineage>
        <taxon>Archaea</taxon>
        <taxon>Methanobacteriati</taxon>
        <taxon>Methanobacteriota</taxon>
        <taxon>Methanomada group</taxon>
        <taxon>Methanococci</taxon>
        <taxon>Methanococcales</taxon>
        <taxon>Methanocaldococcaceae</taxon>
        <taxon>Methanocaldococcus</taxon>
    </lineage>
</organism>
<gene>
    <name type="primary">mrtD</name>
    <name type="synonym">mtrD</name>
    <name type="ordered locus">MJ0118</name>
</gene>